<dbReference type="EC" id="3.5.1.18" evidence="1"/>
<dbReference type="EMBL" id="CP001019">
    <property type="protein sequence ID" value="ACJ18648.1"/>
    <property type="molecule type" value="Genomic_DNA"/>
</dbReference>
<dbReference type="RefSeq" id="WP_005771873.1">
    <property type="nucleotide sequence ID" value="NC_011527.1"/>
</dbReference>
<dbReference type="SMR" id="B6J120"/>
<dbReference type="KEGG" id="cbg:CbuG_1340"/>
<dbReference type="HOGENOM" id="CLU_021802_4_0_6"/>
<dbReference type="UniPathway" id="UPA00034">
    <property type="reaction ID" value="UER00021"/>
</dbReference>
<dbReference type="GO" id="GO:0008777">
    <property type="term" value="F:acetylornithine deacetylase activity"/>
    <property type="evidence" value="ECO:0007669"/>
    <property type="project" value="TreeGrafter"/>
</dbReference>
<dbReference type="GO" id="GO:0050897">
    <property type="term" value="F:cobalt ion binding"/>
    <property type="evidence" value="ECO:0007669"/>
    <property type="project" value="UniProtKB-UniRule"/>
</dbReference>
<dbReference type="GO" id="GO:0009014">
    <property type="term" value="F:succinyl-diaminopimelate desuccinylase activity"/>
    <property type="evidence" value="ECO:0007669"/>
    <property type="project" value="UniProtKB-UniRule"/>
</dbReference>
<dbReference type="GO" id="GO:0008270">
    <property type="term" value="F:zinc ion binding"/>
    <property type="evidence" value="ECO:0007669"/>
    <property type="project" value="UniProtKB-UniRule"/>
</dbReference>
<dbReference type="GO" id="GO:0019877">
    <property type="term" value="P:diaminopimelate biosynthetic process"/>
    <property type="evidence" value="ECO:0007669"/>
    <property type="project" value="UniProtKB-UniRule"/>
</dbReference>
<dbReference type="GO" id="GO:0006526">
    <property type="term" value="P:L-arginine biosynthetic process"/>
    <property type="evidence" value="ECO:0007669"/>
    <property type="project" value="TreeGrafter"/>
</dbReference>
<dbReference type="GO" id="GO:0009089">
    <property type="term" value="P:lysine biosynthetic process via diaminopimelate"/>
    <property type="evidence" value="ECO:0007669"/>
    <property type="project" value="UniProtKB-UniRule"/>
</dbReference>
<dbReference type="CDD" id="cd03891">
    <property type="entry name" value="M20_DapE_proteobac"/>
    <property type="match status" value="1"/>
</dbReference>
<dbReference type="FunFam" id="3.30.70.360:FF:000011">
    <property type="entry name" value="Succinyl-diaminopimelate desuccinylase"/>
    <property type="match status" value="1"/>
</dbReference>
<dbReference type="FunFam" id="3.40.630.10:FF:000005">
    <property type="entry name" value="Succinyl-diaminopimelate desuccinylase"/>
    <property type="match status" value="1"/>
</dbReference>
<dbReference type="Gene3D" id="3.30.70.360">
    <property type="match status" value="1"/>
</dbReference>
<dbReference type="Gene3D" id="3.40.630.10">
    <property type="entry name" value="Zn peptidases"/>
    <property type="match status" value="1"/>
</dbReference>
<dbReference type="HAMAP" id="MF_01690">
    <property type="entry name" value="DapE"/>
    <property type="match status" value="1"/>
</dbReference>
<dbReference type="InterPro" id="IPR001261">
    <property type="entry name" value="ArgE/DapE_CS"/>
</dbReference>
<dbReference type="InterPro" id="IPR036264">
    <property type="entry name" value="Bact_exopeptidase_dim_dom"/>
</dbReference>
<dbReference type="InterPro" id="IPR005941">
    <property type="entry name" value="DapE_proteobac"/>
</dbReference>
<dbReference type="InterPro" id="IPR002933">
    <property type="entry name" value="Peptidase_M20"/>
</dbReference>
<dbReference type="InterPro" id="IPR011650">
    <property type="entry name" value="Peptidase_M20_dimer"/>
</dbReference>
<dbReference type="InterPro" id="IPR050072">
    <property type="entry name" value="Peptidase_M20A"/>
</dbReference>
<dbReference type="NCBIfam" id="TIGR01246">
    <property type="entry name" value="dapE_proteo"/>
    <property type="match status" value="1"/>
</dbReference>
<dbReference type="NCBIfam" id="NF009557">
    <property type="entry name" value="PRK13009.1"/>
    <property type="match status" value="1"/>
</dbReference>
<dbReference type="PANTHER" id="PTHR43808">
    <property type="entry name" value="ACETYLORNITHINE DEACETYLASE"/>
    <property type="match status" value="1"/>
</dbReference>
<dbReference type="PANTHER" id="PTHR43808:SF31">
    <property type="entry name" value="N-ACETYL-L-CITRULLINE DEACETYLASE"/>
    <property type="match status" value="1"/>
</dbReference>
<dbReference type="Pfam" id="PF07687">
    <property type="entry name" value="M20_dimer"/>
    <property type="match status" value="1"/>
</dbReference>
<dbReference type="Pfam" id="PF01546">
    <property type="entry name" value="Peptidase_M20"/>
    <property type="match status" value="1"/>
</dbReference>
<dbReference type="SUPFAM" id="SSF55031">
    <property type="entry name" value="Bacterial exopeptidase dimerisation domain"/>
    <property type="match status" value="1"/>
</dbReference>
<dbReference type="SUPFAM" id="SSF53187">
    <property type="entry name" value="Zn-dependent exopeptidases"/>
    <property type="match status" value="1"/>
</dbReference>
<dbReference type="PROSITE" id="PS00759">
    <property type="entry name" value="ARGE_DAPE_CPG2_2"/>
    <property type="match status" value="1"/>
</dbReference>
<name>DAPE_COXB2</name>
<gene>
    <name evidence="1" type="primary">dapE</name>
    <name type="ordered locus">CbuG_1340</name>
</gene>
<organism>
    <name type="scientific">Coxiella burnetii (strain CbuG_Q212)</name>
    <name type="common">Coxiella burnetii (strain Q212)</name>
    <dbReference type="NCBI Taxonomy" id="434923"/>
    <lineage>
        <taxon>Bacteria</taxon>
        <taxon>Pseudomonadati</taxon>
        <taxon>Pseudomonadota</taxon>
        <taxon>Gammaproteobacteria</taxon>
        <taxon>Legionellales</taxon>
        <taxon>Coxiellaceae</taxon>
        <taxon>Coxiella</taxon>
    </lineage>
</organism>
<feature type="chain" id="PRO_0000375535" description="Succinyl-diaminopimelate desuccinylase">
    <location>
        <begin position="1"/>
        <end position="374"/>
    </location>
</feature>
<feature type="active site" evidence="1">
    <location>
        <position position="68"/>
    </location>
</feature>
<feature type="active site" description="Proton acceptor" evidence="1">
    <location>
        <position position="133"/>
    </location>
</feature>
<feature type="binding site" evidence="1">
    <location>
        <position position="66"/>
    </location>
    <ligand>
        <name>Zn(2+)</name>
        <dbReference type="ChEBI" id="CHEBI:29105"/>
        <label>1</label>
    </ligand>
</feature>
<feature type="binding site" evidence="1">
    <location>
        <position position="99"/>
    </location>
    <ligand>
        <name>Zn(2+)</name>
        <dbReference type="ChEBI" id="CHEBI:29105"/>
        <label>1</label>
    </ligand>
</feature>
<feature type="binding site" evidence="1">
    <location>
        <position position="99"/>
    </location>
    <ligand>
        <name>Zn(2+)</name>
        <dbReference type="ChEBI" id="CHEBI:29105"/>
        <label>2</label>
    </ligand>
</feature>
<feature type="binding site" evidence="1">
    <location>
        <position position="134"/>
    </location>
    <ligand>
        <name>Zn(2+)</name>
        <dbReference type="ChEBI" id="CHEBI:29105"/>
        <label>2</label>
    </ligand>
</feature>
<feature type="binding site" evidence="1">
    <location>
        <position position="162"/>
    </location>
    <ligand>
        <name>Zn(2+)</name>
        <dbReference type="ChEBI" id="CHEBI:29105"/>
        <label>1</label>
    </ligand>
</feature>
<feature type="binding site" evidence="1">
    <location>
        <position position="348"/>
    </location>
    <ligand>
        <name>Zn(2+)</name>
        <dbReference type="ChEBI" id="CHEBI:29105"/>
        <label>2</label>
    </ligand>
</feature>
<comment type="function">
    <text evidence="1">Catalyzes the hydrolysis of N-succinyl-L,L-diaminopimelic acid (SDAP), forming succinate and LL-2,6-diaminopimelate (DAP), an intermediate involved in the bacterial biosynthesis of lysine and meso-diaminopimelic acid, an essential component of bacterial cell walls.</text>
</comment>
<comment type="catalytic activity">
    <reaction evidence="1">
        <text>N-succinyl-(2S,6S)-2,6-diaminopimelate + H2O = (2S,6S)-2,6-diaminopimelate + succinate</text>
        <dbReference type="Rhea" id="RHEA:22608"/>
        <dbReference type="ChEBI" id="CHEBI:15377"/>
        <dbReference type="ChEBI" id="CHEBI:30031"/>
        <dbReference type="ChEBI" id="CHEBI:57609"/>
        <dbReference type="ChEBI" id="CHEBI:58087"/>
        <dbReference type="EC" id="3.5.1.18"/>
    </reaction>
</comment>
<comment type="cofactor">
    <cofactor evidence="1">
        <name>Zn(2+)</name>
        <dbReference type="ChEBI" id="CHEBI:29105"/>
    </cofactor>
    <cofactor evidence="1">
        <name>Co(2+)</name>
        <dbReference type="ChEBI" id="CHEBI:48828"/>
    </cofactor>
    <text evidence="1">Binds 2 Zn(2+) or Co(2+) ions per subunit.</text>
</comment>
<comment type="pathway">
    <text evidence="1">Amino-acid biosynthesis; L-lysine biosynthesis via DAP pathway; LL-2,6-diaminopimelate from (S)-tetrahydrodipicolinate (succinylase route): step 3/3.</text>
</comment>
<comment type="subunit">
    <text evidence="1">Homodimer.</text>
</comment>
<comment type="similarity">
    <text evidence="1">Belongs to the peptidase M20A family. DapE subfamily.</text>
</comment>
<evidence type="ECO:0000255" key="1">
    <source>
        <dbReference type="HAMAP-Rule" id="MF_01690"/>
    </source>
</evidence>
<reference key="1">
    <citation type="journal article" date="2009" name="Infect. Immun.">
        <title>Comparative genomics reveal extensive transposon-mediated genomic plasticity and diversity among potential effector proteins within the genus Coxiella.</title>
        <authorList>
            <person name="Beare P.A."/>
            <person name="Unsworth N."/>
            <person name="Andoh M."/>
            <person name="Voth D.E."/>
            <person name="Omsland A."/>
            <person name="Gilk S.D."/>
            <person name="Williams K.P."/>
            <person name="Sobral B.W."/>
            <person name="Kupko J.J. III"/>
            <person name="Porcella S.F."/>
            <person name="Samuel J.E."/>
            <person name="Heinzen R.A."/>
        </authorList>
    </citation>
    <scope>NUCLEOTIDE SEQUENCE [LARGE SCALE GENOMIC DNA]</scope>
    <source>
        <strain>CbuG_Q212</strain>
    </source>
</reference>
<protein>
    <recommendedName>
        <fullName evidence="1">Succinyl-diaminopimelate desuccinylase</fullName>
        <shortName evidence="1">SDAP desuccinylase</shortName>
        <ecNumber evidence="1">3.5.1.18</ecNumber>
    </recommendedName>
    <alternativeName>
        <fullName evidence="1">N-succinyl-LL-2,6-diaminoheptanedioate amidohydrolase</fullName>
    </alternativeName>
</protein>
<sequence length="374" mass="41644">MSETLNLLKQLIERPSITPNDAGCQTILIDRLKSVGFQCEHLPFGEVHNFWAWHGHQSPFIIFAGHTDVVPPGDETQWHSPPFTPTEKNGYIYGRGAADMKSGLAAMVVAAENFVKQNPDHNGTIGFIVTSDEEGPAENGTQKVVDYLQQKNIKLDYCIVGEASSNEKLGDAIKIGRRGSMHGELTIIGKQGHIAYPHLADNPIHRSFQAFEALAKTKWDEGNEHFTPTSFQFYNVEAGAGAANVIPATLKAKFNFRFAPIHTTQQLQQKVERILNYYQLNYDIQWNVSSQPFFSGNGRLATFVRQAIQEICHLNTEPNTYGGTSDGRFIATTGCEVIELGPVNKTAHHVNENICIADLEKLTDIYFRTLQLLT</sequence>
<accession>B6J120</accession>
<keyword id="KW-0028">Amino-acid biosynthesis</keyword>
<keyword id="KW-0170">Cobalt</keyword>
<keyword id="KW-0220">Diaminopimelate biosynthesis</keyword>
<keyword id="KW-0378">Hydrolase</keyword>
<keyword id="KW-0457">Lysine biosynthesis</keyword>
<keyword id="KW-0479">Metal-binding</keyword>
<keyword id="KW-0862">Zinc</keyword>
<proteinExistence type="inferred from homology"/>